<sequence length="1046" mass="106407">MAGKARVHELAKELGVDSKTVLAKLKDLGEFVKSASSTVEAPVVRKLKEAFPAEGSAPSSRPGGRPGNGARPMPPPRPGPAIGRPGPGSGTGPRPGPGGRPVPGRPGPAPLPGASRPSTPTAAPQSQPAQTQPPQSQPVAPQPSQAPRPAAAAASAAAPAPAPSAPAPAPSAPAPAPITSAPTAATPPAAPQRPTPGGPRPGPAAPGRPRTGGPGGPGGPGGGPRPGPRPGPRPAAPGNNPYTSPAAGPRAASGQGGSPSAPPRPGAPRPGGPRPGGPRPGGPGGQRPSPGQMPPRPGGSGGPRPTPGQMPPRPGGSGGPRPNSNMFQPRPAGGAPGRPGGGGGPGRPGGGGGGPRPGGGGFAPRGGAPGRPGGGGGAPGRPGGGGPGGGGRPAAGGRGRGGTTAGAFGPGGRGRPGRQRKSKRAKRQEWESGLEAPRMGAMVPRGNGQAIRLPRGASLADFADKIDANPGALVQVVFTQLGEMVTATQSCTDETLQLLGVTLGYEVQIVSPEDEDKELLESFDLSFGGDYADDVELSARPPVVTVMGHVDHGKTKLLDAIRSTDVVGGEAGGITQHIGAYQVRAVVDGTERPITFIDTPGHETFTAMRARGAQVTDIVVLVVAADDGVKPQTIEALNHAQAANVPIVVAVNKVDKEGADPAKVRGQLTEYGLVAEEYGGDTMFVDVSARNRTGIDELTEAVILTADASLDLRAPTGTEAQGVAIEGRLDRGRGPVATVLVQRGTLRIGDSVVAGEAFGRVRAMLDENGAQVSEAGPARPVQVLGFTSVPDAGDNFLVVPEDRVARQIAERRQARERNAELALSRGRPTLETILERMKEGEKTQLNLILKGDVSGSVEALEDALLKIDVGDEVGLRIIDRGVGAITETNVMLASASDAVIIGFNVRPQGKATELADREGVEVRYYSVIYQAIEDIENALKGMLKPVYEEAQLGTAEVREVFRVPRVGNVAGSLVRSGIIRRNTKARLIRDGVVVADNLTVESLKRFKDDATEVREGYECGIGLGSFNDIKVDDVIETFEQREVPRT</sequence>
<name>IF2_PARS2</name>
<protein>
    <recommendedName>
        <fullName evidence="2">Translation initiation factor IF-2</fullName>
    </recommendedName>
</protein>
<evidence type="ECO:0000250" key="1"/>
<evidence type="ECO:0000255" key="2">
    <source>
        <dbReference type="HAMAP-Rule" id="MF_00100"/>
    </source>
</evidence>
<evidence type="ECO:0000256" key="3">
    <source>
        <dbReference type="SAM" id="MobiDB-lite"/>
    </source>
</evidence>
<organism>
    <name type="scientific">Parafrankia sp. (strain EAN1pec)</name>
    <dbReference type="NCBI Taxonomy" id="298653"/>
    <lineage>
        <taxon>Bacteria</taxon>
        <taxon>Bacillati</taxon>
        <taxon>Actinomycetota</taxon>
        <taxon>Actinomycetes</taxon>
        <taxon>Frankiales</taxon>
        <taxon>Frankiaceae</taxon>
        <taxon>Parafrankia</taxon>
    </lineage>
</organism>
<dbReference type="EMBL" id="CP000820">
    <property type="protein sequence ID" value="ABW10636.1"/>
    <property type="molecule type" value="Genomic_DNA"/>
</dbReference>
<dbReference type="RefSeq" id="WP_020458812.1">
    <property type="nucleotide sequence ID" value="NC_009921.1"/>
</dbReference>
<dbReference type="SMR" id="A8L6F4"/>
<dbReference type="STRING" id="298653.Franean1_1182"/>
<dbReference type="KEGG" id="fre:Franean1_1182"/>
<dbReference type="eggNOG" id="COG0532">
    <property type="taxonomic scope" value="Bacteria"/>
</dbReference>
<dbReference type="HOGENOM" id="CLU_006301_9_3_11"/>
<dbReference type="GO" id="GO:0005829">
    <property type="term" value="C:cytosol"/>
    <property type="evidence" value="ECO:0007669"/>
    <property type="project" value="TreeGrafter"/>
</dbReference>
<dbReference type="GO" id="GO:0005525">
    <property type="term" value="F:GTP binding"/>
    <property type="evidence" value="ECO:0007669"/>
    <property type="project" value="UniProtKB-KW"/>
</dbReference>
<dbReference type="GO" id="GO:0003924">
    <property type="term" value="F:GTPase activity"/>
    <property type="evidence" value="ECO:0007669"/>
    <property type="project" value="UniProtKB-UniRule"/>
</dbReference>
<dbReference type="GO" id="GO:0003743">
    <property type="term" value="F:translation initiation factor activity"/>
    <property type="evidence" value="ECO:0007669"/>
    <property type="project" value="UniProtKB-UniRule"/>
</dbReference>
<dbReference type="CDD" id="cd01887">
    <property type="entry name" value="IF2_eIF5B"/>
    <property type="match status" value="1"/>
</dbReference>
<dbReference type="CDD" id="cd03702">
    <property type="entry name" value="IF2_mtIF2_II"/>
    <property type="match status" value="1"/>
</dbReference>
<dbReference type="CDD" id="cd03692">
    <property type="entry name" value="mtIF2_IVc"/>
    <property type="match status" value="1"/>
</dbReference>
<dbReference type="FunFam" id="1.10.10.2480:FF:000003">
    <property type="entry name" value="Translation initiation factor IF-2"/>
    <property type="match status" value="1"/>
</dbReference>
<dbReference type="FunFam" id="2.40.30.10:FF:000007">
    <property type="entry name" value="Translation initiation factor IF-2"/>
    <property type="match status" value="1"/>
</dbReference>
<dbReference type="FunFam" id="2.40.30.10:FF:000008">
    <property type="entry name" value="Translation initiation factor IF-2"/>
    <property type="match status" value="1"/>
</dbReference>
<dbReference type="FunFam" id="3.40.50.10050:FF:000001">
    <property type="entry name" value="Translation initiation factor IF-2"/>
    <property type="match status" value="1"/>
</dbReference>
<dbReference type="FunFam" id="3.40.50.300:FF:000019">
    <property type="entry name" value="Translation initiation factor IF-2"/>
    <property type="match status" value="1"/>
</dbReference>
<dbReference type="Gene3D" id="1.10.10.2480">
    <property type="match status" value="1"/>
</dbReference>
<dbReference type="Gene3D" id="3.40.50.300">
    <property type="entry name" value="P-loop containing nucleotide triphosphate hydrolases"/>
    <property type="match status" value="1"/>
</dbReference>
<dbReference type="Gene3D" id="2.40.30.10">
    <property type="entry name" value="Translation factors"/>
    <property type="match status" value="2"/>
</dbReference>
<dbReference type="Gene3D" id="3.40.50.10050">
    <property type="entry name" value="Translation initiation factor IF- 2, domain 3"/>
    <property type="match status" value="1"/>
</dbReference>
<dbReference type="HAMAP" id="MF_00100_B">
    <property type="entry name" value="IF_2_B"/>
    <property type="match status" value="1"/>
</dbReference>
<dbReference type="InterPro" id="IPR053905">
    <property type="entry name" value="EF-G-like_DII"/>
</dbReference>
<dbReference type="InterPro" id="IPR044145">
    <property type="entry name" value="IF2_II"/>
</dbReference>
<dbReference type="InterPro" id="IPR006847">
    <property type="entry name" value="IF2_N"/>
</dbReference>
<dbReference type="InterPro" id="IPR027417">
    <property type="entry name" value="P-loop_NTPase"/>
</dbReference>
<dbReference type="InterPro" id="IPR005225">
    <property type="entry name" value="Small_GTP-bd"/>
</dbReference>
<dbReference type="InterPro" id="IPR000795">
    <property type="entry name" value="T_Tr_GTP-bd_dom"/>
</dbReference>
<dbReference type="InterPro" id="IPR000178">
    <property type="entry name" value="TF_IF2_bacterial-like"/>
</dbReference>
<dbReference type="InterPro" id="IPR015760">
    <property type="entry name" value="TIF_IF2"/>
</dbReference>
<dbReference type="InterPro" id="IPR023115">
    <property type="entry name" value="TIF_IF2_dom3"/>
</dbReference>
<dbReference type="InterPro" id="IPR036925">
    <property type="entry name" value="TIF_IF2_dom3_sf"/>
</dbReference>
<dbReference type="InterPro" id="IPR009000">
    <property type="entry name" value="Transl_B-barrel_sf"/>
</dbReference>
<dbReference type="NCBIfam" id="TIGR00487">
    <property type="entry name" value="IF-2"/>
    <property type="match status" value="1"/>
</dbReference>
<dbReference type="NCBIfam" id="TIGR00231">
    <property type="entry name" value="small_GTP"/>
    <property type="match status" value="1"/>
</dbReference>
<dbReference type="PANTHER" id="PTHR43381:SF5">
    <property type="entry name" value="TR-TYPE G DOMAIN-CONTAINING PROTEIN"/>
    <property type="match status" value="1"/>
</dbReference>
<dbReference type="PANTHER" id="PTHR43381">
    <property type="entry name" value="TRANSLATION INITIATION FACTOR IF-2-RELATED"/>
    <property type="match status" value="1"/>
</dbReference>
<dbReference type="Pfam" id="PF22042">
    <property type="entry name" value="EF-G_D2"/>
    <property type="match status" value="1"/>
</dbReference>
<dbReference type="Pfam" id="PF00009">
    <property type="entry name" value="GTP_EFTU"/>
    <property type="match status" value="1"/>
</dbReference>
<dbReference type="Pfam" id="PF11987">
    <property type="entry name" value="IF-2"/>
    <property type="match status" value="1"/>
</dbReference>
<dbReference type="Pfam" id="PF04760">
    <property type="entry name" value="IF2_N"/>
    <property type="match status" value="1"/>
</dbReference>
<dbReference type="PRINTS" id="PR01217">
    <property type="entry name" value="PRICHEXTENSN"/>
</dbReference>
<dbReference type="SMART" id="SM00173">
    <property type="entry name" value="RAS"/>
    <property type="match status" value="1"/>
</dbReference>
<dbReference type="SUPFAM" id="SSF52156">
    <property type="entry name" value="Initiation factor IF2/eIF5b, domain 3"/>
    <property type="match status" value="1"/>
</dbReference>
<dbReference type="SUPFAM" id="SSF52540">
    <property type="entry name" value="P-loop containing nucleoside triphosphate hydrolases"/>
    <property type="match status" value="1"/>
</dbReference>
<dbReference type="SUPFAM" id="SSF50447">
    <property type="entry name" value="Translation proteins"/>
    <property type="match status" value="2"/>
</dbReference>
<dbReference type="PROSITE" id="PS51722">
    <property type="entry name" value="G_TR_2"/>
    <property type="match status" value="1"/>
</dbReference>
<dbReference type="PROSITE" id="PS01176">
    <property type="entry name" value="IF2"/>
    <property type="match status" value="1"/>
</dbReference>
<reference key="1">
    <citation type="journal article" date="2007" name="Genome Res.">
        <title>Genome characteristics of facultatively symbiotic Frankia sp. strains reflect host range and host plant biogeography.</title>
        <authorList>
            <person name="Normand P."/>
            <person name="Lapierre P."/>
            <person name="Tisa L.S."/>
            <person name="Gogarten J.P."/>
            <person name="Alloisio N."/>
            <person name="Bagnarol E."/>
            <person name="Bassi C.A."/>
            <person name="Berry A.M."/>
            <person name="Bickhart D.M."/>
            <person name="Choisne N."/>
            <person name="Couloux A."/>
            <person name="Cournoyer B."/>
            <person name="Cruveiller S."/>
            <person name="Daubin V."/>
            <person name="Demange N."/>
            <person name="Francino M.P."/>
            <person name="Goltsman E."/>
            <person name="Huang Y."/>
            <person name="Kopp O.R."/>
            <person name="Labarre L."/>
            <person name="Lapidus A."/>
            <person name="Lavire C."/>
            <person name="Marechal J."/>
            <person name="Martinez M."/>
            <person name="Mastronunzio J.E."/>
            <person name="Mullin B.C."/>
            <person name="Niemann J."/>
            <person name="Pujic P."/>
            <person name="Rawnsley T."/>
            <person name="Rouy Z."/>
            <person name="Schenowitz C."/>
            <person name="Sellstedt A."/>
            <person name="Tavares F."/>
            <person name="Tomkins J.P."/>
            <person name="Vallenet D."/>
            <person name="Valverde C."/>
            <person name="Wall L.G."/>
            <person name="Wang Y."/>
            <person name="Medigue C."/>
            <person name="Benson D.R."/>
        </authorList>
    </citation>
    <scope>NUCLEOTIDE SEQUENCE [LARGE SCALE GENOMIC DNA]</scope>
    <source>
        <strain>EAN1pec</strain>
    </source>
</reference>
<accession>A8L6F4</accession>
<proteinExistence type="inferred from homology"/>
<feature type="chain" id="PRO_1000093786" description="Translation initiation factor IF-2">
    <location>
        <begin position="1"/>
        <end position="1046"/>
    </location>
</feature>
<feature type="domain" description="tr-type G">
    <location>
        <begin position="539"/>
        <end position="711"/>
    </location>
</feature>
<feature type="region of interest" description="Disordered" evidence="3">
    <location>
        <begin position="49"/>
        <end position="448"/>
    </location>
</feature>
<feature type="region of interest" description="G1" evidence="1">
    <location>
        <begin position="548"/>
        <end position="555"/>
    </location>
</feature>
<feature type="region of interest" description="G2" evidence="1">
    <location>
        <begin position="573"/>
        <end position="577"/>
    </location>
</feature>
<feature type="region of interest" description="G3" evidence="1">
    <location>
        <begin position="598"/>
        <end position="601"/>
    </location>
</feature>
<feature type="region of interest" description="G4" evidence="1">
    <location>
        <begin position="652"/>
        <end position="655"/>
    </location>
</feature>
<feature type="region of interest" description="G5" evidence="1">
    <location>
        <begin position="688"/>
        <end position="690"/>
    </location>
</feature>
<feature type="compositionally biased region" description="Low complexity" evidence="3">
    <location>
        <begin position="52"/>
        <end position="71"/>
    </location>
</feature>
<feature type="compositionally biased region" description="Pro residues" evidence="3">
    <location>
        <begin position="94"/>
        <end position="111"/>
    </location>
</feature>
<feature type="compositionally biased region" description="Low complexity" evidence="3">
    <location>
        <begin position="112"/>
        <end position="139"/>
    </location>
</feature>
<feature type="compositionally biased region" description="Low complexity" evidence="3">
    <location>
        <begin position="147"/>
        <end position="159"/>
    </location>
</feature>
<feature type="compositionally biased region" description="Pro residues" evidence="3">
    <location>
        <begin position="160"/>
        <end position="176"/>
    </location>
</feature>
<feature type="compositionally biased region" description="Low complexity" evidence="3">
    <location>
        <begin position="177"/>
        <end position="187"/>
    </location>
</feature>
<feature type="compositionally biased region" description="Pro residues" evidence="3">
    <location>
        <begin position="188"/>
        <end position="206"/>
    </location>
</feature>
<feature type="compositionally biased region" description="Gly residues" evidence="3">
    <location>
        <begin position="210"/>
        <end position="222"/>
    </location>
</feature>
<feature type="compositionally biased region" description="Pro residues" evidence="3">
    <location>
        <begin position="223"/>
        <end position="235"/>
    </location>
</feature>
<feature type="compositionally biased region" description="Low complexity" evidence="3">
    <location>
        <begin position="244"/>
        <end position="253"/>
    </location>
</feature>
<feature type="compositionally biased region" description="Pro residues" evidence="3">
    <location>
        <begin position="260"/>
        <end position="281"/>
    </location>
</feature>
<feature type="compositionally biased region" description="Pro residues" evidence="3">
    <location>
        <begin position="304"/>
        <end position="314"/>
    </location>
</feature>
<feature type="compositionally biased region" description="Low complexity" evidence="3">
    <location>
        <begin position="320"/>
        <end position="333"/>
    </location>
</feature>
<feature type="compositionally biased region" description="Gly residues" evidence="3">
    <location>
        <begin position="334"/>
        <end position="414"/>
    </location>
</feature>
<feature type="compositionally biased region" description="Basic residues" evidence="3">
    <location>
        <begin position="415"/>
        <end position="426"/>
    </location>
</feature>
<feature type="binding site" evidence="2">
    <location>
        <begin position="548"/>
        <end position="555"/>
    </location>
    <ligand>
        <name>GTP</name>
        <dbReference type="ChEBI" id="CHEBI:37565"/>
    </ligand>
</feature>
<feature type="binding site" evidence="2">
    <location>
        <begin position="598"/>
        <end position="602"/>
    </location>
    <ligand>
        <name>GTP</name>
        <dbReference type="ChEBI" id="CHEBI:37565"/>
    </ligand>
</feature>
<feature type="binding site" evidence="2">
    <location>
        <begin position="652"/>
        <end position="655"/>
    </location>
    <ligand>
        <name>GTP</name>
        <dbReference type="ChEBI" id="CHEBI:37565"/>
    </ligand>
</feature>
<keyword id="KW-0963">Cytoplasm</keyword>
<keyword id="KW-0342">GTP-binding</keyword>
<keyword id="KW-0396">Initiation factor</keyword>
<keyword id="KW-0547">Nucleotide-binding</keyword>
<keyword id="KW-0648">Protein biosynthesis</keyword>
<comment type="function">
    <text evidence="2">One of the essential components for the initiation of protein synthesis. Protects formylmethionyl-tRNA from spontaneous hydrolysis and promotes its binding to the 30S ribosomal subunits. Also involved in the hydrolysis of GTP during the formation of the 70S ribosomal complex.</text>
</comment>
<comment type="subcellular location">
    <subcellularLocation>
        <location evidence="2">Cytoplasm</location>
    </subcellularLocation>
</comment>
<comment type="similarity">
    <text evidence="2">Belongs to the TRAFAC class translation factor GTPase superfamily. Classic translation factor GTPase family. IF-2 subfamily.</text>
</comment>
<gene>
    <name evidence="2" type="primary">infB</name>
    <name type="ordered locus">Franean1_1182</name>
</gene>